<name>AROC_FRATT</name>
<reference key="1">
    <citation type="journal article" date="2005" name="Nat. Genet.">
        <title>The complete genome sequence of Francisella tularensis, the causative agent of tularemia.</title>
        <authorList>
            <person name="Larsson P."/>
            <person name="Oyston P.C.F."/>
            <person name="Chain P."/>
            <person name="Chu M.C."/>
            <person name="Duffield M."/>
            <person name="Fuxelius H.-H."/>
            <person name="Garcia E."/>
            <person name="Haelltorp G."/>
            <person name="Johansson D."/>
            <person name="Isherwood K.E."/>
            <person name="Karp P.D."/>
            <person name="Larsson E."/>
            <person name="Liu Y."/>
            <person name="Michell S."/>
            <person name="Prior J."/>
            <person name="Prior R."/>
            <person name="Malfatti S."/>
            <person name="Sjoestedt A."/>
            <person name="Svensson K."/>
            <person name="Thompson N."/>
            <person name="Vergez L."/>
            <person name="Wagg J.K."/>
            <person name="Wren B.W."/>
            <person name="Lindler L.E."/>
            <person name="Andersson S.G.E."/>
            <person name="Forsman M."/>
            <person name="Titball R.W."/>
        </authorList>
    </citation>
    <scope>NUCLEOTIDE SEQUENCE [LARGE SCALE GENOMIC DNA]</scope>
    <source>
        <strain>SCHU S4 / Schu 4</strain>
    </source>
</reference>
<proteinExistence type="inferred from homology"/>
<protein>
    <recommendedName>
        <fullName evidence="1">Chorismate synthase</fullName>
        <shortName evidence="1">CS</shortName>
        <ecNumber evidence="1">4.2.3.5</ecNumber>
    </recommendedName>
    <alternativeName>
        <fullName evidence="1">5-enolpyruvylshikimate-3-phosphate phospholyase</fullName>
    </alternativeName>
</protein>
<accession>Q5NGG6</accession>
<dbReference type="EC" id="4.2.3.5" evidence="1"/>
<dbReference type="EMBL" id="AJ749949">
    <property type="protein sequence ID" value="CAG45509.1"/>
    <property type="molecule type" value="Genomic_DNA"/>
</dbReference>
<dbReference type="RefSeq" id="WP_003020861.1">
    <property type="nucleotide sequence ID" value="NZ_CP010290.1"/>
</dbReference>
<dbReference type="RefSeq" id="YP_169876.1">
    <property type="nucleotide sequence ID" value="NC_006570.2"/>
</dbReference>
<dbReference type="SMR" id="Q5NGG6"/>
<dbReference type="IntAct" id="Q5NGG6">
    <property type="interactions" value="1"/>
</dbReference>
<dbReference type="STRING" id="177416.FTT_0876c"/>
<dbReference type="DNASU" id="3190943"/>
<dbReference type="EnsemblBacteria" id="CAG45509">
    <property type="protein sequence ID" value="CAG45509"/>
    <property type="gene ID" value="FTT_0876c"/>
</dbReference>
<dbReference type="KEGG" id="ftu:FTT_0876c"/>
<dbReference type="eggNOG" id="COG0082">
    <property type="taxonomic scope" value="Bacteria"/>
</dbReference>
<dbReference type="OrthoDB" id="9771806at2"/>
<dbReference type="UniPathway" id="UPA00053">
    <property type="reaction ID" value="UER00090"/>
</dbReference>
<dbReference type="Proteomes" id="UP000001174">
    <property type="component" value="Chromosome"/>
</dbReference>
<dbReference type="GO" id="GO:0005829">
    <property type="term" value="C:cytosol"/>
    <property type="evidence" value="ECO:0007669"/>
    <property type="project" value="TreeGrafter"/>
</dbReference>
<dbReference type="GO" id="GO:0004107">
    <property type="term" value="F:chorismate synthase activity"/>
    <property type="evidence" value="ECO:0007669"/>
    <property type="project" value="UniProtKB-UniRule"/>
</dbReference>
<dbReference type="GO" id="GO:0010181">
    <property type="term" value="F:FMN binding"/>
    <property type="evidence" value="ECO:0007669"/>
    <property type="project" value="TreeGrafter"/>
</dbReference>
<dbReference type="GO" id="GO:0008652">
    <property type="term" value="P:amino acid biosynthetic process"/>
    <property type="evidence" value="ECO:0007669"/>
    <property type="project" value="UniProtKB-KW"/>
</dbReference>
<dbReference type="GO" id="GO:0009073">
    <property type="term" value="P:aromatic amino acid family biosynthetic process"/>
    <property type="evidence" value="ECO:0007669"/>
    <property type="project" value="UniProtKB-KW"/>
</dbReference>
<dbReference type="GO" id="GO:0009423">
    <property type="term" value="P:chorismate biosynthetic process"/>
    <property type="evidence" value="ECO:0007669"/>
    <property type="project" value="UniProtKB-UniRule"/>
</dbReference>
<dbReference type="CDD" id="cd07304">
    <property type="entry name" value="Chorismate_synthase"/>
    <property type="match status" value="1"/>
</dbReference>
<dbReference type="Gene3D" id="3.60.150.10">
    <property type="entry name" value="Chorismate synthase AroC"/>
    <property type="match status" value="1"/>
</dbReference>
<dbReference type="HAMAP" id="MF_00300">
    <property type="entry name" value="Chorismate_synth"/>
    <property type="match status" value="1"/>
</dbReference>
<dbReference type="InterPro" id="IPR000453">
    <property type="entry name" value="Chorismate_synth"/>
</dbReference>
<dbReference type="InterPro" id="IPR035904">
    <property type="entry name" value="Chorismate_synth_AroC_sf"/>
</dbReference>
<dbReference type="InterPro" id="IPR020541">
    <property type="entry name" value="Chorismate_synthase_CS"/>
</dbReference>
<dbReference type="NCBIfam" id="TIGR00033">
    <property type="entry name" value="aroC"/>
    <property type="match status" value="1"/>
</dbReference>
<dbReference type="NCBIfam" id="NF003793">
    <property type="entry name" value="PRK05382.1"/>
    <property type="match status" value="1"/>
</dbReference>
<dbReference type="PANTHER" id="PTHR21085">
    <property type="entry name" value="CHORISMATE SYNTHASE"/>
    <property type="match status" value="1"/>
</dbReference>
<dbReference type="PANTHER" id="PTHR21085:SF0">
    <property type="entry name" value="CHORISMATE SYNTHASE"/>
    <property type="match status" value="1"/>
</dbReference>
<dbReference type="Pfam" id="PF01264">
    <property type="entry name" value="Chorismate_synt"/>
    <property type="match status" value="1"/>
</dbReference>
<dbReference type="PIRSF" id="PIRSF001456">
    <property type="entry name" value="Chorismate_synth"/>
    <property type="match status" value="1"/>
</dbReference>
<dbReference type="SUPFAM" id="SSF103263">
    <property type="entry name" value="Chorismate synthase, AroC"/>
    <property type="match status" value="1"/>
</dbReference>
<dbReference type="PROSITE" id="PS00787">
    <property type="entry name" value="CHORISMATE_SYNTHASE_1"/>
    <property type="match status" value="1"/>
</dbReference>
<dbReference type="PROSITE" id="PS00788">
    <property type="entry name" value="CHORISMATE_SYNTHASE_2"/>
    <property type="match status" value="1"/>
</dbReference>
<dbReference type="PROSITE" id="PS00789">
    <property type="entry name" value="CHORISMATE_SYNTHASE_3"/>
    <property type="match status" value="1"/>
</dbReference>
<gene>
    <name evidence="1" type="primary">aroC</name>
    <name type="ordered locus">FTT_0876c</name>
</gene>
<keyword id="KW-0028">Amino-acid biosynthesis</keyword>
<keyword id="KW-0057">Aromatic amino acid biosynthesis</keyword>
<keyword id="KW-0274">FAD</keyword>
<keyword id="KW-0285">Flavoprotein</keyword>
<keyword id="KW-0288">FMN</keyword>
<keyword id="KW-0456">Lyase</keyword>
<keyword id="KW-0521">NADP</keyword>
<keyword id="KW-1185">Reference proteome</keyword>
<feature type="chain" id="PRO_0000140589" description="Chorismate synthase">
    <location>
        <begin position="1"/>
        <end position="352"/>
    </location>
</feature>
<feature type="binding site" evidence="1">
    <location>
        <position position="48"/>
    </location>
    <ligand>
        <name>NADP(+)</name>
        <dbReference type="ChEBI" id="CHEBI:58349"/>
    </ligand>
</feature>
<feature type="binding site" evidence="1">
    <location>
        <begin position="125"/>
        <end position="127"/>
    </location>
    <ligand>
        <name>FMN</name>
        <dbReference type="ChEBI" id="CHEBI:58210"/>
    </ligand>
</feature>
<feature type="binding site" evidence="1">
    <location>
        <begin position="237"/>
        <end position="238"/>
    </location>
    <ligand>
        <name>FMN</name>
        <dbReference type="ChEBI" id="CHEBI:58210"/>
    </ligand>
</feature>
<feature type="binding site" evidence="1">
    <location>
        <position position="278"/>
    </location>
    <ligand>
        <name>FMN</name>
        <dbReference type="ChEBI" id="CHEBI:58210"/>
    </ligand>
</feature>
<feature type="binding site" evidence="1">
    <location>
        <begin position="293"/>
        <end position="297"/>
    </location>
    <ligand>
        <name>FMN</name>
        <dbReference type="ChEBI" id="CHEBI:58210"/>
    </ligand>
</feature>
<feature type="binding site" evidence="1">
    <location>
        <position position="319"/>
    </location>
    <ligand>
        <name>FMN</name>
        <dbReference type="ChEBI" id="CHEBI:58210"/>
    </ligand>
</feature>
<organism>
    <name type="scientific">Francisella tularensis subsp. tularensis (strain SCHU S4 / Schu 4)</name>
    <dbReference type="NCBI Taxonomy" id="177416"/>
    <lineage>
        <taxon>Bacteria</taxon>
        <taxon>Pseudomonadati</taxon>
        <taxon>Pseudomonadota</taxon>
        <taxon>Gammaproteobacteria</taxon>
        <taxon>Thiotrichales</taxon>
        <taxon>Francisellaceae</taxon>
        <taxon>Francisella</taxon>
    </lineage>
</organism>
<evidence type="ECO:0000255" key="1">
    <source>
        <dbReference type="HAMAP-Rule" id="MF_00300"/>
    </source>
</evidence>
<sequence length="352" mass="38020">MSGNTFGKIFTVTTCGESHGDSLAAIIDGCPSNIPLCEADIQLELDRRKPGQSKFTTQRKEPDEVKIISGVFEGKTTGTPIGLIIKNQDQKSKDYSEIKDKFRPGHADYTYFKKYGIRDYRGGGRSSARETAMRVAAGAIAKKILKHYGIEIYGFCSQIGSLKIDFIDKDFINQNPFFIANKNAVPACEDLIHSIRKQGDSIGAEVTVVATGLEAGLGRPVFDRLDASIAYAMMSINAVKAVSIGDGFDCVAQKGSQHRDEITQQQGFLSNHAGGILGGISTGQDIIAKLAFKPTSSILQPGKSIDVQGNDTTVITKGRHDPCVGIRGVPIAEAMLALVLVDELLITRSYRD</sequence>
<comment type="function">
    <text evidence="1">Catalyzes the anti-1,4-elimination of the C-3 phosphate and the C-6 proR hydrogen from 5-enolpyruvylshikimate-3-phosphate (EPSP) to yield chorismate, which is the branch point compound that serves as the starting substrate for the three terminal pathways of aromatic amino acid biosynthesis. This reaction introduces a second double bond into the aromatic ring system.</text>
</comment>
<comment type="catalytic activity">
    <reaction evidence="1">
        <text>5-O-(1-carboxyvinyl)-3-phosphoshikimate = chorismate + phosphate</text>
        <dbReference type="Rhea" id="RHEA:21020"/>
        <dbReference type="ChEBI" id="CHEBI:29748"/>
        <dbReference type="ChEBI" id="CHEBI:43474"/>
        <dbReference type="ChEBI" id="CHEBI:57701"/>
        <dbReference type="EC" id="4.2.3.5"/>
    </reaction>
</comment>
<comment type="cofactor">
    <cofactor evidence="1">
        <name>FMNH2</name>
        <dbReference type="ChEBI" id="CHEBI:57618"/>
    </cofactor>
    <text evidence="1">Reduced FMN (FMNH(2)).</text>
</comment>
<comment type="pathway">
    <text evidence="1">Metabolic intermediate biosynthesis; chorismate biosynthesis; chorismate from D-erythrose 4-phosphate and phosphoenolpyruvate: step 7/7.</text>
</comment>
<comment type="subunit">
    <text evidence="1">Homotetramer.</text>
</comment>
<comment type="similarity">
    <text evidence="1">Belongs to the chorismate synthase family.</text>
</comment>